<dbReference type="EC" id="2.7.1.140" evidence="5"/>
<dbReference type="EC" id="2.7.1.151" evidence="4 5 6 9"/>
<dbReference type="EC" id="2.7.1.153" evidence="2"/>
<dbReference type="EMBL" id="AF432853">
    <property type="protein sequence ID" value="AAM97838.1"/>
    <property type="molecule type" value="mRNA"/>
</dbReference>
<dbReference type="EMBL" id="BK000580">
    <property type="protein sequence ID" value="DAA01362.1"/>
    <property type="molecule type" value="mRNA"/>
</dbReference>
<dbReference type="EMBL" id="BC065709">
    <property type="protein sequence ID" value="AAH65709.1"/>
    <property type="molecule type" value="mRNA"/>
</dbReference>
<dbReference type="CCDS" id="CCDS7250.1"/>
<dbReference type="RefSeq" id="NP_689416.1">
    <property type="nucleotide sequence ID" value="NM_152230.5"/>
</dbReference>
<dbReference type="PDB" id="5W2G">
    <property type="method" value="X-ray"/>
    <property type="resolution" value="1.80 A"/>
    <property type="chains" value="A=50-262, A=378-416"/>
</dbReference>
<dbReference type="PDB" id="5W2H">
    <property type="method" value="X-ray"/>
    <property type="resolution" value="1.90 A"/>
    <property type="chains" value="A=50-262, A=378-416"/>
</dbReference>
<dbReference type="PDB" id="5W2I">
    <property type="method" value="X-ray"/>
    <property type="resolution" value="1.60 A"/>
    <property type="chains" value="A=50-262, A=378-416"/>
</dbReference>
<dbReference type="PDB" id="6E7F">
    <property type="method" value="X-ray"/>
    <property type="resolution" value="2.50 A"/>
    <property type="chains" value="A/B=70-279, A/B=374-416"/>
</dbReference>
<dbReference type="PDB" id="6M88">
    <property type="method" value="X-ray"/>
    <property type="resolution" value="1.90 A"/>
    <property type="chains" value="A=50-262, A=378-416"/>
</dbReference>
<dbReference type="PDB" id="6M89">
    <property type="method" value="X-ray"/>
    <property type="resolution" value="1.85 A"/>
    <property type="chains" value="A=50-262, A=378-416"/>
</dbReference>
<dbReference type="PDB" id="6M8A">
    <property type="method" value="X-ray"/>
    <property type="resolution" value="1.75 A"/>
    <property type="chains" value="A=50-262, A=378-416"/>
</dbReference>
<dbReference type="PDB" id="6M8B">
    <property type="method" value="X-ray"/>
    <property type="resolution" value="1.80 A"/>
    <property type="chains" value="A=50-262, A=378-416"/>
</dbReference>
<dbReference type="PDB" id="6M8C">
    <property type="method" value="X-ray"/>
    <property type="resolution" value="1.80 A"/>
    <property type="chains" value="A=50-262, A=378-416"/>
</dbReference>
<dbReference type="PDB" id="6M8D">
    <property type="method" value="X-ray"/>
    <property type="resolution" value="2.00 A"/>
    <property type="chains" value="A=50-262, A=378-416"/>
</dbReference>
<dbReference type="PDB" id="6M8E">
    <property type="method" value="X-ray"/>
    <property type="resolution" value="2.00 A"/>
    <property type="chains" value="A=50-262, A=378-416"/>
</dbReference>
<dbReference type="PDB" id="8V6W">
    <property type="method" value="X-ray"/>
    <property type="resolution" value="1.95 A"/>
    <property type="chains" value="A=50-262, A=378-416"/>
</dbReference>
<dbReference type="PDB" id="8V6X">
    <property type="method" value="X-ray"/>
    <property type="resolution" value="1.75 A"/>
    <property type="chains" value="A=50-262, A=378-416"/>
</dbReference>
<dbReference type="PDB" id="8V6Y">
    <property type="method" value="X-ray"/>
    <property type="resolution" value="1.70 A"/>
    <property type="chains" value="A=50-262, A=378-416"/>
</dbReference>
<dbReference type="PDB" id="8V6Z">
    <property type="method" value="X-ray"/>
    <property type="resolution" value="1.85 A"/>
    <property type="chains" value="A=50-262, A=378-416"/>
</dbReference>
<dbReference type="PDB" id="8V70">
    <property type="method" value="X-ray"/>
    <property type="resolution" value="1.85 A"/>
    <property type="chains" value="A=50-262, A=378-416"/>
</dbReference>
<dbReference type="PDB" id="8V71">
    <property type="method" value="X-ray"/>
    <property type="resolution" value="1.70 A"/>
    <property type="chains" value="A=50-262, A=378-416"/>
</dbReference>
<dbReference type="PDB" id="8V72">
    <property type="method" value="X-ray"/>
    <property type="resolution" value="2.00 A"/>
    <property type="chains" value="A=50-262, A=378-416"/>
</dbReference>
<dbReference type="PDB" id="8V73">
    <property type="method" value="X-ray"/>
    <property type="resolution" value="1.90 A"/>
    <property type="chains" value="A=50-262, A=378-416"/>
</dbReference>
<dbReference type="PDB" id="8V74">
    <property type="method" value="X-ray"/>
    <property type="resolution" value="1.85 A"/>
    <property type="chains" value="A=50-262, A=378-416"/>
</dbReference>
<dbReference type="PDB" id="8V75">
    <property type="method" value="X-ray"/>
    <property type="resolution" value="1.85 A"/>
    <property type="chains" value="A=50-262, A=378-416"/>
</dbReference>
<dbReference type="PDB" id="8V76">
    <property type="method" value="X-ray"/>
    <property type="resolution" value="1.90 A"/>
    <property type="chains" value="A=50-262, A=378-416"/>
</dbReference>
<dbReference type="PDB" id="8V77">
    <property type="method" value="X-ray"/>
    <property type="resolution" value="1.95 A"/>
    <property type="chains" value="A=50-262, A=378-416"/>
</dbReference>
<dbReference type="PDB" id="8V78">
    <property type="method" value="X-ray"/>
    <property type="resolution" value="1.96 A"/>
    <property type="chains" value="A=50-262, A=378-416"/>
</dbReference>
<dbReference type="PDB" id="8V79">
    <property type="method" value="X-ray"/>
    <property type="resolution" value="1.95 A"/>
    <property type="chains" value="A=50-262, A=378-416"/>
</dbReference>
<dbReference type="PDBsum" id="5W2G"/>
<dbReference type="PDBsum" id="5W2H"/>
<dbReference type="PDBsum" id="5W2I"/>
<dbReference type="PDBsum" id="6E7F"/>
<dbReference type="PDBsum" id="6M88"/>
<dbReference type="PDBsum" id="6M89"/>
<dbReference type="PDBsum" id="6M8A"/>
<dbReference type="PDBsum" id="6M8B"/>
<dbReference type="PDBsum" id="6M8C"/>
<dbReference type="PDBsum" id="6M8D"/>
<dbReference type="PDBsum" id="6M8E"/>
<dbReference type="PDBsum" id="8V6W"/>
<dbReference type="PDBsum" id="8V6X"/>
<dbReference type="PDBsum" id="8V6Y"/>
<dbReference type="PDBsum" id="8V6Z"/>
<dbReference type="PDBsum" id="8V70"/>
<dbReference type="PDBsum" id="8V71"/>
<dbReference type="PDBsum" id="8V72"/>
<dbReference type="PDBsum" id="8V73"/>
<dbReference type="PDBsum" id="8V74"/>
<dbReference type="PDBsum" id="8V75"/>
<dbReference type="PDBsum" id="8V76"/>
<dbReference type="PDBsum" id="8V77"/>
<dbReference type="PDBsum" id="8V78"/>
<dbReference type="PDBsum" id="8V79"/>
<dbReference type="SMR" id="Q8NFU5"/>
<dbReference type="BioGRID" id="128968">
    <property type="interactions" value="12"/>
</dbReference>
<dbReference type="FunCoup" id="Q8NFU5">
    <property type="interactions" value="2384"/>
</dbReference>
<dbReference type="IntAct" id="Q8NFU5">
    <property type="interactions" value="4"/>
</dbReference>
<dbReference type="STRING" id="9606.ENSP00000363046"/>
<dbReference type="BindingDB" id="Q8NFU5"/>
<dbReference type="ChEMBL" id="CHEMBL4523401"/>
<dbReference type="DrugCentral" id="Q8NFU5"/>
<dbReference type="GlyGen" id="Q8NFU5">
    <property type="glycosylation" value="1 site, 1 O-linked glycan (1 site)"/>
</dbReference>
<dbReference type="iPTMnet" id="Q8NFU5"/>
<dbReference type="PhosphoSitePlus" id="Q8NFU5"/>
<dbReference type="BioMuta" id="IPMK"/>
<dbReference type="DMDM" id="50401072"/>
<dbReference type="jPOST" id="Q8NFU5"/>
<dbReference type="MassIVE" id="Q8NFU5"/>
<dbReference type="PaxDb" id="9606-ENSP00000363046"/>
<dbReference type="PeptideAtlas" id="Q8NFU5"/>
<dbReference type="ProteomicsDB" id="73362"/>
<dbReference type="Pumba" id="Q8NFU5"/>
<dbReference type="Antibodypedia" id="28039">
    <property type="antibodies" value="192 antibodies from 27 providers"/>
</dbReference>
<dbReference type="DNASU" id="253430"/>
<dbReference type="Ensembl" id="ENST00000373935.4">
    <property type="protein sequence ID" value="ENSP00000363046.3"/>
    <property type="gene ID" value="ENSG00000151151.6"/>
</dbReference>
<dbReference type="GeneID" id="253430"/>
<dbReference type="KEGG" id="hsa:253430"/>
<dbReference type="MANE-Select" id="ENST00000373935.4">
    <property type="protein sequence ID" value="ENSP00000363046.3"/>
    <property type="RefSeq nucleotide sequence ID" value="NM_152230.5"/>
    <property type="RefSeq protein sequence ID" value="NP_689416.1"/>
</dbReference>
<dbReference type="UCSC" id="uc001jkb.3">
    <property type="organism name" value="human"/>
</dbReference>
<dbReference type="AGR" id="HGNC:20739"/>
<dbReference type="CTD" id="253430"/>
<dbReference type="DisGeNET" id="253430"/>
<dbReference type="GeneCards" id="IPMK"/>
<dbReference type="HGNC" id="HGNC:20739">
    <property type="gene designation" value="IPMK"/>
</dbReference>
<dbReference type="HPA" id="ENSG00000151151">
    <property type="expression patterns" value="Tissue enhanced (liver)"/>
</dbReference>
<dbReference type="MalaCards" id="IPMK"/>
<dbReference type="MIM" id="609851">
    <property type="type" value="gene"/>
</dbReference>
<dbReference type="neXtProt" id="NX_Q8NFU5"/>
<dbReference type="OpenTargets" id="ENSG00000151151"/>
<dbReference type="Orphanet" id="456333">
    <property type="disease" value="Hereditary neuroendocrine tumor of small intestine"/>
</dbReference>
<dbReference type="PharmGKB" id="PA134903369"/>
<dbReference type="VEuPathDB" id="HostDB:ENSG00000151151"/>
<dbReference type="eggNOG" id="KOG1620">
    <property type="taxonomic scope" value="Eukaryota"/>
</dbReference>
<dbReference type="GeneTree" id="ENSGT00940000155309"/>
<dbReference type="HOGENOM" id="CLU_042569_0_0_1"/>
<dbReference type="InParanoid" id="Q8NFU5"/>
<dbReference type="OMA" id="ATIYTNH"/>
<dbReference type="OrthoDB" id="338650at2759"/>
<dbReference type="PAN-GO" id="Q8NFU5">
    <property type="GO annotations" value="5 GO annotations based on evolutionary models"/>
</dbReference>
<dbReference type="PhylomeDB" id="Q8NFU5"/>
<dbReference type="TreeFam" id="TF321442"/>
<dbReference type="BioCyc" id="MetaCyc:HS07712-MONOMER"/>
<dbReference type="BRENDA" id="2.7.1.151">
    <property type="organism ID" value="2681"/>
</dbReference>
<dbReference type="PathwayCommons" id="Q8NFU5"/>
<dbReference type="Reactome" id="R-HSA-1855191">
    <property type="pathway name" value="Synthesis of IPs in the nucleus"/>
</dbReference>
<dbReference type="SABIO-RK" id="Q8NFU5"/>
<dbReference type="SignaLink" id="Q8NFU5"/>
<dbReference type="UniPathway" id="UPA00949"/>
<dbReference type="BioGRID-ORCS" id="253430">
    <property type="hits" value="40 hits in 1147 CRISPR screens"/>
</dbReference>
<dbReference type="CD-CODE" id="F9F5AA60">
    <property type="entry name" value="Synthetic Condensate 000278"/>
</dbReference>
<dbReference type="ChiTaRS" id="IPMK">
    <property type="organism name" value="human"/>
</dbReference>
<dbReference type="GenomeRNAi" id="253430"/>
<dbReference type="Pharos" id="Q8NFU5">
    <property type="development level" value="Tbio"/>
</dbReference>
<dbReference type="PRO" id="PR:Q8NFU5"/>
<dbReference type="Proteomes" id="UP000005640">
    <property type="component" value="Chromosome 10"/>
</dbReference>
<dbReference type="RNAct" id="Q8NFU5">
    <property type="molecule type" value="protein"/>
</dbReference>
<dbReference type="Bgee" id="ENSG00000151151">
    <property type="expression patterns" value="Expressed in buccal mucosa cell and 189 other cell types or tissues"/>
</dbReference>
<dbReference type="GO" id="GO:0036064">
    <property type="term" value="C:ciliary basal body"/>
    <property type="evidence" value="ECO:0000314"/>
    <property type="project" value="HPA"/>
</dbReference>
<dbReference type="GO" id="GO:0005737">
    <property type="term" value="C:cytoplasm"/>
    <property type="evidence" value="ECO:0000318"/>
    <property type="project" value="GO_Central"/>
</dbReference>
<dbReference type="GO" id="GO:0005654">
    <property type="term" value="C:nucleoplasm"/>
    <property type="evidence" value="ECO:0000314"/>
    <property type="project" value="HPA"/>
</dbReference>
<dbReference type="GO" id="GO:0005634">
    <property type="term" value="C:nucleus"/>
    <property type="evidence" value="ECO:0000318"/>
    <property type="project" value="GO_Central"/>
</dbReference>
<dbReference type="GO" id="GO:0046934">
    <property type="term" value="F:1-phosphatidylinositol-4,5-bisphosphate 3-kinase activity"/>
    <property type="evidence" value="ECO:0000250"/>
    <property type="project" value="UniProtKB"/>
</dbReference>
<dbReference type="GO" id="GO:0005524">
    <property type="term" value="F:ATP binding"/>
    <property type="evidence" value="ECO:0007669"/>
    <property type="project" value="UniProtKB-KW"/>
</dbReference>
<dbReference type="GO" id="GO:0097243">
    <property type="term" value="F:flavonoid binding"/>
    <property type="evidence" value="ECO:0000314"/>
    <property type="project" value="UniProtKB"/>
</dbReference>
<dbReference type="GO" id="GO:0051765">
    <property type="term" value="F:inositol tetrakisphosphate kinase activity"/>
    <property type="evidence" value="ECO:0000318"/>
    <property type="project" value="GO_Central"/>
</dbReference>
<dbReference type="GO" id="GO:0000825">
    <property type="term" value="F:inositol-1,3,4,5-tetrakisphosphate 6-kinase activity"/>
    <property type="evidence" value="ECO:0000315"/>
    <property type="project" value="UniProtKB"/>
</dbReference>
<dbReference type="GO" id="GO:0047326">
    <property type="term" value="F:inositol-1,3,4,6-tetrakisphosphate 5-kinase activity"/>
    <property type="evidence" value="ECO:0000250"/>
    <property type="project" value="UniProtKB"/>
</dbReference>
<dbReference type="GO" id="GO:0000824">
    <property type="term" value="F:inositol-1,4,5,6-tetrakisphosphate 3-kinase activity"/>
    <property type="evidence" value="ECO:0000250"/>
    <property type="project" value="UniProtKB"/>
</dbReference>
<dbReference type="GO" id="GO:0008440">
    <property type="term" value="F:inositol-1,4,5-trisphosphate 3-kinase activity"/>
    <property type="evidence" value="ECO:0000314"/>
    <property type="project" value="UniProtKB"/>
</dbReference>
<dbReference type="GO" id="GO:0000823">
    <property type="term" value="F:inositol-1,4,5-trisphosphate 6-kinase activity"/>
    <property type="evidence" value="ECO:0000250"/>
    <property type="project" value="UniProtKB"/>
</dbReference>
<dbReference type="GO" id="GO:0046872">
    <property type="term" value="F:metal ion binding"/>
    <property type="evidence" value="ECO:0007669"/>
    <property type="project" value="UniProtKB-KW"/>
</dbReference>
<dbReference type="GO" id="GO:0032958">
    <property type="term" value="P:inositol phosphate biosynthetic process"/>
    <property type="evidence" value="ECO:0000318"/>
    <property type="project" value="GO_Central"/>
</dbReference>
<dbReference type="GO" id="GO:0043647">
    <property type="term" value="P:inositol phosphate metabolic process"/>
    <property type="evidence" value="ECO:0000304"/>
    <property type="project" value="Reactome"/>
</dbReference>
<dbReference type="GO" id="GO:0032957">
    <property type="term" value="P:inositol trisphosphate metabolic process"/>
    <property type="evidence" value="ECO:0000314"/>
    <property type="project" value="UniProtKB"/>
</dbReference>
<dbReference type="GO" id="GO:0070266">
    <property type="term" value="P:necroptotic process"/>
    <property type="evidence" value="ECO:0000315"/>
    <property type="project" value="UniProtKB"/>
</dbReference>
<dbReference type="GO" id="GO:0046488">
    <property type="term" value="P:phosphatidylinositol metabolic process"/>
    <property type="evidence" value="ECO:0007669"/>
    <property type="project" value="UniProtKB-UniPathway"/>
</dbReference>
<dbReference type="Gene3D" id="3.30.470.160">
    <property type="entry name" value="Inositol polyphosphate kinase"/>
    <property type="match status" value="1"/>
</dbReference>
<dbReference type="InterPro" id="IPR005522">
    <property type="entry name" value="IPK"/>
</dbReference>
<dbReference type="InterPro" id="IPR038286">
    <property type="entry name" value="IPK_sf"/>
</dbReference>
<dbReference type="PANTHER" id="PTHR12400">
    <property type="entry name" value="INOSITOL POLYPHOSPHATE KINASE"/>
    <property type="match status" value="1"/>
</dbReference>
<dbReference type="PANTHER" id="PTHR12400:SF80">
    <property type="entry name" value="INOSITOL POLYPHOSPHATE MULTIKINASE"/>
    <property type="match status" value="1"/>
</dbReference>
<dbReference type="Pfam" id="PF03770">
    <property type="entry name" value="IPK"/>
    <property type="match status" value="1"/>
</dbReference>
<dbReference type="SUPFAM" id="SSF56104">
    <property type="entry name" value="SAICAR synthase-like"/>
    <property type="match status" value="1"/>
</dbReference>
<accession>Q8NFU5</accession>
<gene>
    <name type="primary">IPMK</name>
    <name evidence="11" type="synonym">IMPK</name>
</gene>
<keyword id="KW-0002">3D-structure</keyword>
<keyword id="KW-0007">Acetylation</keyword>
<keyword id="KW-0067">ATP-binding</keyword>
<keyword id="KW-0418">Kinase</keyword>
<keyword id="KW-0443">Lipid metabolism</keyword>
<keyword id="KW-0460">Magnesium</keyword>
<keyword id="KW-0479">Metal-binding</keyword>
<keyword id="KW-0547">Nucleotide-binding</keyword>
<keyword id="KW-0539">Nucleus</keyword>
<keyword id="KW-1208">Phospholipid metabolism</keyword>
<keyword id="KW-0597">Phosphoprotein</keyword>
<keyword id="KW-1267">Proteomics identification</keyword>
<keyword id="KW-1185">Reference proteome</keyword>
<keyword id="KW-0808">Transferase</keyword>
<reference key="1">
    <citation type="journal article" date="2002" name="Biochem. J.">
        <title>The human homologue of yeast ArgRIII protein is an inositol phosphate multikinase with predominantly nuclear localization.</title>
        <authorList>
            <person name="Nalaskowski M.M."/>
            <person name="Deschermeier C."/>
            <person name="Fanick W."/>
            <person name="Mayr G.W."/>
        </authorList>
    </citation>
    <scope>NUCLEOTIDE SEQUENCE [MRNA]</scope>
    <scope>FUNCTION</scope>
    <scope>CATALYTIC ACTIVITY</scope>
    <scope>MUTAGENESIS OF 322-ARG-LYS-323 AND 327-LYS-LYS-328</scope>
    <scope>SUBCELLULAR LOCATION</scope>
</reference>
<reference key="2">
    <citation type="journal article" date="2002" name="J. Biol. Chem.">
        <title>The human homolog of the rat inositol phosphate multikinase is an inositol 1,3,4,6-tetrakisphosphate 5-kinase.</title>
        <authorList>
            <person name="Chang S.-C."/>
            <person name="Miller A.L."/>
            <person name="Feng Y."/>
            <person name="Wente S.R."/>
            <person name="Majerus P.W."/>
        </authorList>
    </citation>
    <scope>NUCLEOTIDE SEQUENCE [MRNA]</scope>
    <scope>FUNCTION</scope>
    <scope>CATALYTIC ACTIVITY</scope>
    <scope>BIOPHYSICOCHEMICAL PROPERTIES</scope>
    <scope>TISSUE SPECIFICITY</scope>
</reference>
<reference key="3">
    <citation type="journal article" date="2004" name="Genome Res.">
        <title>The status, quality, and expansion of the NIH full-length cDNA project: the Mammalian Gene Collection (MGC).</title>
        <authorList>
            <consortium name="The MGC Project Team"/>
        </authorList>
    </citation>
    <scope>NUCLEOTIDE SEQUENCE [LARGE SCALE MRNA]</scope>
    <source>
        <tissue>Brain</tissue>
    </source>
</reference>
<reference key="4">
    <citation type="journal article" date="2008" name="Mol. Cell">
        <title>Kinase-selective enrichment enables quantitative phosphoproteomics of the kinome across the cell cycle.</title>
        <authorList>
            <person name="Daub H."/>
            <person name="Olsen J.V."/>
            <person name="Bairlein M."/>
            <person name="Gnad F."/>
            <person name="Oppermann F.S."/>
            <person name="Korner R."/>
            <person name="Greff Z."/>
            <person name="Keri G."/>
            <person name="Stemmann O."/>
            <person name="Mann M."/>
        </authorList>
    </citation>
    <scope>PHOSPHORYLATION [LARGE SCALE ANALYSIS] AT SER-7</scope>
    <scope>IDENTIFICATION BY MASS SPECTROMETRY [LARGE SCALE ANALYSIS]</scope>
    <source>
        <tissue>Cervix carcinoma</tissue>
    </source>
</reference>
<reference key="5">
    <citation type="journal article" date="2009" name="Mol. Cell. Proteomics">
        <title>Large-scale proteomics analysis of the human kinome.</title>
        <authorList>
            <person name="Oppermann F.S."/>
            <person name="Gnad F."/>
            <person name="Olsen J.V."/>
            <person name="Hornberger R."/>
            <person name="Greff Z."/>
            <person name="Keri G."/>
            <person name="Mann M."/>
            <person name="Daub H."/>
        </authorList>
    </citation>
    <scope>ACETYLATION [LARGE SCALE ANALYSIS] AT ALA-2</scope>
    <scope>PHOSPHORYLATION [LARGE SCALE ANALYSIS] AT SER-7</scope>
    <scope>CLEAVAGE OF INITIATOR METHIONINE [LARGE SCALE ANALYSIS]</scope>
    <scope>IDENTIFICATION BY MASS SPECTROMETRY [LARGE SCALE ANALYSIS]</scope>
</reference>
<reference key="6">
    <citation type="journal article" date="2013" name="J. Proteome Res.">
        <title>Toward a comprehensive characterization of a human cancer cell phosphoproteome.</title>
        <authorList>
            <person name="Zhou H."/>
            <person name="Di Palma S."/>
            <person name="Preisinger C."/>
            <person name="Peng M."/>
            <person name="Polat A.N."/>
            <person name="Heck A.J."/>
            <person name="Mohammed S."/>
        </authorList>
    </citation>
    <scope>IDENTIFICATION BY MASS SPECTROMETRY [LARGE SCALE ANALYSIS]</scope>
    <source>
        <tissue>Erythroleukemia</tissue>
    </source>
</reference>
<reference key="7">
    <citation type="journal article" date="2018" name="Mol. Cell">
        <title>MLKL requires the inositol phosphate code to execute necroptosis.</title>
        <authorList>
            <person name="Dovey C.M."/>
            <person name="Diep J."/>
            <person name="Clarke B.P."/>
            <person name="Hale A.T."/>
            <person name="McNamara D.E."/>
            <person name="Guo H."/>
            <person name="Brown N.W. Jr."/>
            <person name="Cao J.Y."/>
            <person name="Grace C.R."/>
            <person name="Gough P.J."/>
            <person name="Bertin J."/>
            <person name="Dixon S.J."/>
            <person name="Fiedler D."/>
            <person name="Mocarski E.S."/>
            <person name="Kaiser W.J."/>
            <person name="Moldoveanu T."/>
            <person name="York J.D."/>
            <person name="Carette J.E."/>
        </authorList>
    </citation>
    <scope>FUNCTION</scope>
</reference>
<reference evidence="17 18 19" key="8">
    <citation type="journal article" date="2017" name="J. Biol. Chem.">
        <title>Structural features of human inositol phosphate multikinase rationalize its inositol phosphate kinase and phosphoinositide 3-kinase activities.</title>
        <authorList>
            <person name="Wang H."/>
            <person name="Shears S.B."/>
        </authorList>
    </citation>
    <scope>X-RAY CRYSTALLOGRAPHY (1.60 ANGSTROMS) OF 50-262 AND 378-416 IN COMPLEXES WITH ADP; MAGNESIUM AND MYOINOSITOL-TRISPHOSPHATE</scope>
    <scope>FUNCTION</scope>
    <scope>PATHWAY</scope>
    <scope>CATALYTIC ACTIVITY</scope>
    <scope>MUTAGENESIS OF GLN-78; ARG-82; LYS-160; GLN-163; GLN-164; LYS-167; GLN-196 AND HIS-388</scope>
</reference>
<reference evidence="20" key="9">
    <citation type="journal article" date="2018" name="Sci. Rep.">
        <title>Crystallographic and kinetic analyses of human IPMK reveal disordered domains modulate ATP binding and kinase activity.</title>
        <authorList>
            <person name="Seacrist C.D."/>
            <person name="Blind R.D."/>
        </authorList>
    </citation>
    <scope>X-RAY CRYSTALLOGRAPHY (2.50 ANGSTROMS) OF 70-278 AND 374-416</scope>
    <scope>CATALYTIC ACTIVITY</scope>
    <scope>FUNCTION</scope>
    <scope>BIOPHYSICOCHEMICAL PROPERTIES</scope>
    <scope>MUTAGENESIS OF 2-ALA--PRO-69 AND 279-SER--CYS-373</scope>
</reference>
<reference key="10">
    <citation type="journal article" date="2019" name="J. Med. Chem.">
        <title>Inhibition of Inositol Polyphosphate Kinases by Quercetin and Related Flavonoids: A Structure-Activity Analysis.</title>
        <authorList>
            <person name="Gu C."/>
            <person name="Stashko M.A."/>
            <person name="Puhl-Rubio A.C."/>
            <person name="Chakraborty M."/>
            <person name="Chakraborty A."/>
            <person name="Frye S.V."/>
            <person name="Pearce K.H."/>
            <person name="Wang X."/>
            <person name="Shears S.B."/>
            <person name="Wang H."/>
        </authorList>
    </citation>
    <scope>X-RAY CRYSTALLOGRAPHY (1.75 ANGSTROMS) OF 50-279 AND 378-416 IN COMPLEXES WITH FLAVONOIDS</scope>
    <scope>FUNCTION</scope>
    <scope>CATALYTIC ACTIVITY</scope>
    <scope>COFACTOR</scope>
    <scope>ACTIVITY REGULATION</scope>
</reference>
<comment type="function">
    <text evidence="1 4 5 6 7 8 9">Inositol phosphate kinase with a broad substrate specificity (PubMed:12027805, PubMed:12223481, PubMed:28882892, PubMed:30420721, PubMed:30624931). Phosphorylates inositol 1,4,5-trisphosphate (Ins(1,4,5)P3) first to inositol 1,3,4,5-tetrakisphosphate and then to inositol 1,3,4,5,6-pentakisphosphate (Ins(1,3,4,5,6)P5) (PubMed:12027805, PubMed:12223481, PubMed:28882892, PubMed:30624931). Phosphorylates inositol 1,3,4,6-tetrakisphosphate (Ins(1,3,4,6)P4) (PubMed:12223481). Phosphorylates inositol 1,4,5,6-tetrakisphosphate (Ins(1,4,5,6)P4) (By similarity). Phosphorylates glycero-3-phospho-1D-myo-inositol 4,5-bisphosphate to glycero-3-phospho-1D-myo-inositol 3,4,5-trisphosphate (PubMed:28882892, PubMed:30420721). Plays an important role in MLKL-mediated necroptosis via its role in the biosynthesis of inositol pentakisphosphate (InsP5) and inositol hexakisphosphate (InsP6). Binding of these highly phosphorylated inositol phosphates to MLKL mediates the release of an N-terminal auto-inhibitory region, leading to activation of the kinase. Essential for activated phospho-MLKL to oligomerize and localize to the cell membrane during necroptosis (PubMed:29883610). Required for normal embryonic development, probably via its role in the biosynthesis of inositol 1,3,4,5,6-pentakisphosphate (Ins(1,3,4,5,6)P5) and inositol hexakisphosphate (InsP6) (By similarity).</text>
</comment>
<comment type="catalytic activity">
    <reaction evidence="4 5 6 9">
        <text>1D-myo-inositol 1,4,5-trisphosphate + 2 ATP = 1D-myo-inositol 1,3,4,5,6-pentakisphosphate + 2 ADP + 2 H(+)</text>
        <dbReference type="Rhea" id="RHEA:32359"/>
        <dbReference type="ChEBI" id="CHEBI:15378"/>
        <dbReference type="ChEBI" id="CHEBI:30616"/>
        <dbReference type="ChEBI" id="CHEBI:57733"/>
        <dbReference type="ChEBI" id="CHEBI:203600"/>
        <dbReference type="ChEBI" id="CHEBI:456216"/>
        <dbReference type="EC" id="2.7.1.151"/>
    </reaction>
</comment>
<comment type="catalytic activity">
    <reaction evidence="5">
        <text>1D-myo-inositol 1,3,4,6-tetrakisphosphate + ATP = 1D-myo-inositol 1,3,4,5,6-pentakisphosphate + ADP + H(+)</text>
        <dbReference type="Rhea" id="RHEA:12717"/>
        <dbReference type="ChEBI" id="CHEBI:15378"/>
        <dbReference type="ChEBI" id="CHEBI:30616"/>
        <dbReference type="ChEBI" id="CHEBI:57660"/>
        <dbReference type="ChEBI" id="CHEBI:57733"/>
        <dbReference type="ChEBI" id="CHEBI:456216"/>
        <dbReference type="EC" id="2.7.1.140"/>
    </reaction>
</comment>
<comment type="catalytic activity">
    <reaction evidence="14 15">
        <text>1-octadecanoyl-2-(5Z,8Z,11Z,14Z)-eicosatetraenoyl-sn-glycero-3-phospho-1D-myo-inositol 4,5-bisphosphate + ATP = 1-octadecanoyl-2-(5Z,8Z,11Z,14Z-eicosatetraenoyl)-sn-glycero-3-phospho-(1D-myo-inositol 3,4,5-triphosphate) + ADP + H(+)</text>
        <dbReference type="Rhea" id="RHEA:43396"/>
        <dbReference type="ChEBI" id="CHEBI:15378"/>
        <dbReference type="ChEBI" id="CHEBI:30616"/>
        <dbReference type="ChEBI" id="CHEBI:77137"/>
        <dbReference type="ChEBI" id="CHEBI:83243"/>
        <dbReference type="ChEBI" id="CHEBI:456216"/>
    </reaction>
</comment>
<comment type="catalytic activity">
    <reaction evidence="2">
        <text>a 1,2-diacyl-sn-glycero-3-phospho-(1D-myo-inositol-4,5-bisphosphate) + ATP = a 1,2-diacyl-sn-glycero-3-phospho-(1D-myo-inositol-3,4,5-trisphosphate) + ADP + H(+)</text>
        <dbReference type="Rhea" id="RHEA:21292"/>
        <dbReference type="ChEBI" id="CHEBI:15378"/>
        <dbReference type="ChEBI" id="CHEBI:30616"/>
        <dbReference type="ChEBI" id="CHEBI:57836"/>
        <dbReference type="ChEBI" id="CHEBI:58456"/>
        <dbReference type="ChEBI" id="CHEBI:456216"/>
        <dbReference type="EC" id="2.7.1.153"/>
    </reaction>
    <physiologicalReaction direction="left-to-right" evidence="2">
        <dbReference type="Rhea" id="RHEA:21293"/>
    </physiologicalReaction>
</comment>
<comment type="catalytic activity">
    <reaction evidence="2">
        <text>1D-myo-inositol 1,4,5,6-tetrakisphosphate + ATP = 1D-myo-inositol 1,3,4,5,6-pentakisphosphate + ADP + H(+)</text>
        <dbReference type="Rhea" id="RHEA:11856"/>
        <dbReference type="ChEBI" id="CHEBI:15378"/>
        <dbReference type="ChEBI" id="CHEBI:30616"/>
        <dbReference type="ChEBI" id="CHEBI:57627"/>
        <dbReference type="ChEBI" id="CHEBI:57733"/>
        <dbReference type="ChEBI" id="CHEBI:456216"/>
    </reaction>
</comment>
<comment type="cofactor">
    <cofactor evidence="14 16">
        <name>Mg(2+)</name>
        <dbReference type="ChEBI" id="CHEBI:18420"/>
    </cofactor>
    <text evidence="9">Binds two Mg(2+), but the interaction with the protein is mostly indirect.</text>
</comment>
<comment type="activity regulation">
    <text evidence="9">Inhibited by flavonoids that occupy the ATP-binding pocket. Inhibited by myricetin, quercetin, luteolin, kaempferol, isorhamnetin and diosmetin, and to a lesser degree by rhamnetin and apigenin.</text>
</comment>
<comment type="biophysicochemical properties">
    <kinetics>
        <KM evidence="5">112 nM for myo-inositol-1,4,5-trisphosphate</KM>
        <KM evidence="5">295 nM for myo-inositol-1,3,4,6-tetrakisphosphate</KM>
        <KM evidence="5">129 nM for myo-inositol-1,3,4,5-tetrakisphosphate</KM>
        <KM evidence="8">61 uM for ATP</KM>
        <KM evidence="8">39 uM for phosphatidylinositol 4,5-bisphosphate</KM>
        <Vmax evidence="5">27.0 nmol/min/mg enzyme with myo-inositol-1,4,5-trisphosphate as substrate</Vmax>
        <Vmax evidence="5">114.0 nmol/min/mg enzyme with myo-inositol-1,3,4,6-tetrakisphosphate as substrate</Vmax>
        <Vmax evidence="5">1.1 nmol/min/mg enzyme with myo-inositol-1,3,4,5-tetrakisphosphate as substrate</Vmax>
    </kinetics>
</comment>
<comment type="pathway">
    <text evidence="4 5 6 9">Phospholipid metabolism; phosphatidylinositol metabolism.</text>
</comment>
<comment type="interaction">
    <interactant intactId="EBI-11347579">
        <id>Q8NFU5</id>
    </interactant>
    <interactant intactId="EBI-7116203">
        <id>O75031</id>
        <label>HSF2BP</label>
    </interactant>
    <organismsDiffer>false</organismsDiffer>
    <experiments>3</experiments>
</comment>
<comment type="subcellular location">
    <subcellularLocation>
        <location evidence="4">Nucleus</location>
    </subcellularLocation>
</comment>
<comment type="tissue specificity">
    <text evidence="5">Ubiquitous, with the highest expression in skeletal muscle, liver, placenta, lung, peripheral blood leukocytes, kidney, spleen and colon.</text>
</comment>
<comment type="similarity">
    <text evidence="12">Belongs to the inositol phosphokinase (IPK) family.</text>
</comment>
<organism>
    <name type="scientific">Homo sapiens</name>
    <name type="common">Human</name>
    <dbReference type="NCBI Taxonomy" id="9606"/>
    <lineage>
        <taxon>Eukaryota</taxon>
        <taxon>Metazoa</taxon>
        <taxon>Chordata</taxon>
        <taxon>Craniata</taxon>
        <taxon>Vertebrata</taxon>
        <taxon>Euteleostomi</taxon>
        <taxon>Mammalia</taxon>
        <taxon>Eutheria</taxon>
        <taxon>Euarchontoglires</taxon>
        <taxon>Primates</taxon>
        <taxon>Haplorrhini</taxon>
        <taxon>Catarrhini</taxon>
        <taxon>Hominidae</taxon>
        <taxon>Homo</taxon>
    </lineage>
</organism>
<evidence type="ECO:0000250" key="1">
    <source>
        <dbReference type="UniProtKB" id="Q7TT16"/>
    </source>
</evidence>
<evidence type="ECO:0000250" key="2">
    <source>
        <dbReference type="UniProtKB" id="Q99NI4"/>
    </source>
</evidence>
<evidence type="ECO:0000256" key="3">
    <source>
        <dbReference type="SAM" id="MobiDB-lite"/>
    </source>
</evidence>
<evidence type="ECO:0000269" key="4">
    <source>
    </source>
</evidence>
<evidence type="ECO:0000269" key="5">
    <source>
    </source>
</evidence>
<evidence type="ECO:0000269" key="6">
    <source>
    </source>
</evidence>
<evidence type="ECO:0000269" key="7">
    <source>
    </source>
</evidence>
<evidence type="ECO:0000269" key="8">
    <source>
    </source>
</evidence>
<evidence type="ECO:0000269" key="9">
    <source>
    </source>
</evidence>
<evidence type="ECO:0000303" key="10">
    <source>
    </source>
</evidence>
<evidence type="ECO:0000303" key="11">
    <source>
    </source>
</evidence>
<evidence type="ECO:0000305" key="12"/>
<evidence type="ECO:0000305" key="13">
    <source>
    </source>
</evidence>
<evidence type="ECO:0000305" key="14">
    <source>
    </source>
</evidence>
<evidence type="ECO:0000305" key="15">
    <source>
    </source>
</evidence>
<evidence type="ECO:0000305" key="16">
    <source>
    </source>
</evidence>
<evidence type="ECO:0007744" key="17">
    <source>
        <dbReference type="PDB" id="5W2G"/>
    </source>
</evidence>
<evidence type="ECO:0007744" key="18">
    <source>
        <dbReference type="PDB" id="5W2H"/>
    </source>
</evidence>
<evidence type="ECO:0007744" key="19">
    <source>
        <dbReference type="PDB" id="5W2I"/>
    </source>
</evidence>
<evidence type="ECO:0007744" key="20">
    <source>
        <dbReference type="PDB" id="6E7F"/>
    </source>
</evidence>
<evidence type="ECO:0007744" key="21">
    <source>
    </source>
</evidence>
<evidence type="ECO:0007744" key="22">
    <source>
    </source>
</evidence>
<evidence type="ECO:0007829" key="23">
    <source>
        <dbReference type="PDB" id="5W2I"/>
    </source>
</evidence>
<evidence type="ECO:0007829" key="24">
    <source>
        <dbReference type="PDB" id="6M8A"/>
    </source>
</evidence>
<sequence length="416" mass="47222">MATEPPSPLRVEAPGPPEMRTSPAIESTPEGTPQPAGGRLRFLNGCVPLSHQVAGHMYGKDKVGILQHPDGTVLKQLQPPPRGPRELEFYNMVYAADCFDGVLLELRKYLPKYYGIWSPPTAPNDLYLKLEDVTHKFNKPCIMDVKIGQKSYDPFASSEKIQQQVSKYPLMEEIGFLVLGMRVYHVHSDSYETENQHYGRSLTKETIKDGVSRFFHNGYCLRKDAVAASIQKIEKILQWFENQKQLNFYASSLLFVYEGSSQPTTTKLNDRTLAEKFLSKGQLSDTEVLEYNNNFHVLSSTANGKIESSVGKSLSKMYARHRKIYTKKHHSQTSLKVENLEQDNGWKSMSQEHLNGNVLSQLEKVFYHLPTGCQEIAEVEVRMIDFAHVFPSNTIDEGYVYGLKHLISVLRSILDN</sequence>
<proteinExistence type="evidence at protein level"/>
<feature type="initiator methionine" description="Removed" evidence="22">
    <location>
        <position position="1"/>
    </location>
</feature>
<feature type="chain" id="PRO_0000066870" description="Inositol polyphosphate multikinase">
    <location>
        <begin position="2"/>
        <end position="416"/>
    </location>
</feature>
<feature type="region of interest" description="Disordered" evidence="3">
    <location>
        <begin position="1"/>
        <end position="38"/>
    </location>
</feature>
<feature type="short sequence motif" description="Nuclear localization signal" evidence="13">
    <location>
        <begin position="320"/>
        <end position="330"/>
    </location>
</feature>
<feature type="binding site" evidence="6 18 19">
    <location>
        <position position="75"/>
    </location>
    <ligand>
        <name>ATP</name>
        <dbReference type="ChEBI" id="CHEBI:30616"/>
    </ligand>
</feature>
<feature type="binding site" evidence="6 18 19">
    <location>
        <position position="82"/>
    </location>
    <ligand>
        <name>substrate</name>
    </ligand>
</feature>
<feature type="binding site" evidence="6 18 19">
    <location>
        <begin position="131"/>
        <end position="133"/>
    </location>
    <ligand>
        <name>ATP</name>
        <dbReference type="ChEBI" id="CHEBI:30616"/>
    </ligand>
</feature>
<feature type="binding site" evidence="6 18 19">
    <location>
        <position position="144"/>
    </location>
    <ligand>
        <name>ATP</name>
        <dbReference type="ChEBI" id="CHEBI:30616"/>
    </ligand>
</feature>
<feature type="binding site" evidence="6 18 19">
    <location>
        <position position="146"/>
    </location>
    <ligand>
        <name>substrate</name>
    </ligand>
</feature>
<feature type="binding site" evidence="6 18">
    <location>
        <begin position="160"/>
        <end position="167"/>
    </location>
    <ligand>
        <name>substrate</name>
    </ligand>
</feature>
<feature type="binding site" evidence="6 18 19">
    <location>
        <position position="196"/>
    </location>
    <ligand>
        <name>substrate</name>
    </ligand>
</feature>
<feature type="binding site" evidence="6 18 19">
    <location>
        <position position="385"/>
    </location>
    <ligand>
        <name>ATP</name>
        <dbReference type="ChEBI" id="CHEBI:30616"/>
    </ligand>
</feature>
<feature type="binding site" evidence="6 18 19">
    <location>
        <position position="388"/>
    </location>
    <ligand>
        <name>substrate</name>
    </ligand>
</feature>
<feature type="modified residue" description="N-acetylalanine" evidence="22">
    <location>
        <position position="2"/>
    </location>
</feature>
<feature type="modified residue" description="Phosphoserine" evidence="21 22">
    <location>
        <position position="7"/>
    </location>
</feature>
<feature type="sequence variant" id="VAR_022112" description="In dbSNP:rs2275443.">
    <original>M</original>
    <variation>I</variation>
    <location>
        <position position="349"/>
    </location>
</feature>
<feature type="mutagenesis site" description="No effect on affinity for phosphatidylinositol 4,5-bisphosphate and mildly increased enzyme activity; when associated with 279-S--V-365 DEL and 366-G--S-373." evidence="8">
    <location>
        <begin position="2"/>
        <end position="69"/>
    </location>
</feature>
<feature type="mutagenesis site" description="Strongly decreased enzyme activity." evidence="6">
    <original>Q</original>
    <variation>A</variation>
    <location>
        <position position="78"/>
    </location>
</feature>
<feature type="mutagenesis site" description="Strongly decreased enzyme activity." evidence="6">
    <original>R</original>
    <variation>A</variation>
    <location>
        <position position="82"/>
    </location>
</feature>
<feature type="mutagenesis site" description="Loss of kinase activity and ability to execute necroptosis; when associated with A-146." evidence="7">
    <original>D</original>
    <variation>N</variation>
    <location>
        <position position="144"/>
    </location>
</feature>
<feature type="mutagenesis site" description="Loss of kinase activity and ability to execute necroptosis; when associated with N-144." evidence="7">
    <original>K</original>
    <variation>A</variation>
    <location>
        <position position="146"/>
    </location>
</feature>
<feature type="mutagenesis site" description="Strongly decreased enzyme activity." evidence="6">
    <original>K</original>
    <variation>A</variation>
    <location>
        <position position="160"/>
    </location>
</feature>
<feature type="mutagenesis site" description="Moderately decreased enzyme activity." evidence="6">
    <original>Q</original>
    <variation>A</variation>
    <location>
        <position position="163"/>
    </location>
</feature>
<feature type="mutagenesis site" description="Decreased activity with inositol 1,4,5-trisphosphate. No effect on phosphorylation of inositol 1,3,4,5-tetrakisphosphate." evidence="6">
    <original>Q</original>
    <variation>R</variation>
    <location>
        <position position="163"/>
    </location>
</feature>
<feature type="mutagenesis site" description="Strongly decreased enzyme activity." evidence="6">
    <original>Q</original>
    <variation>A</variation>
    <location>
        <position position="164"/>
    </location>
</feature>
<feature type="mutagenesis site" description="Decreased activity with inositol 1,4,5-trisphosphate. Increased phosphorylation of inositol 1,3,4,5-tetrakisphosphate." evidence="6">
    <original>Q</original>
    <variation>R</variation>
    <location>
        <position position="164"/>
    </location>
</feature>
<feature type="mutagenesis site" description="Decreased enzyme activity." evidence="6">
    <original>K</original>
    <variation>A</variation>
    <location>
        <position position="167"/>
    </location>
</feature>
<feature type="mutagenesis site" description="Decreased enzyme activity." evidence="6">
    <original>Q</original>
    <variation>A</variation>
    <location>
        <position position="196"/>
    </location>
</feature>
<feature type="mutagenesis site" description="Decreased activity with inositol 1,4,5-trisphosphate. Increased phosphorylation of inositol 1,3,4,5-tetrakisphosphate." evidence="6">
    <original>Q</original>
    <variation>R</variation>
    <location>
        <position position="196"/>
    </location>
</feature>
<feature type="mutagenesis site" description="No effect on affinity for phosphatidylinositol 4,5-bisphosphate and mildly increased enzyme activity; when associated with 2-A--P-69 DEL and 366-G--S-373 DEL." evidence="8">
    <location>
        <begin position="279"/>
        <end position="365"/>
    </location>
</feature>
<feature type="mutagenesis site" description="Interferes with nuclear localization." evidence="4">
    <original>RK</original>
    <variation>QQ</variation>
    <location>
        <begin position="322"/>
        <end position="323"/>
    </location>
</feature>
<feature type="mutagenesis site" description="Interferes with nuclear localization." evidence="4">
    <original>KK</original>
    <variation>QQ</variation>
    <location>
        <begin position="327"/>
        <end position="328"/>
    </location>
</feature>
<feature type="mutagenesis site" description="No effect on affinity for phosphatidylinositol 4,5-bisphosphate and mildly increased enzyme activity; when associated with 2-A--P-69 DEL and 279-S--V-365 DEL." evidence="8">
    <original>FYHLPTGC</original>
    <variation>GGGGSGGGGS</variation>
    <location>
        <begin position="366"/>
        <end position="373"/>
    </location>
</feature>
<feature type="mutagenesis site" description="Loss of enzyme activity." evidence="6">
    <original>H</original>
    <variation>A</variation>
    <location>
        <position position="388"/>
    </location>
</feature>
<feature type="strand" evidence="23">
    <location>
        <begin position="66"/>
        <end position="68"/>
    </location>
</feature>
<feature type="turn" evidence="23">
    <location>
        <begin position="69"/>
        <end position="71"/>
    </location>
</feature>
<feature type="strand" evidence="23">
    <location>
        <begin position="72"/>
        <end position="76"/>
    </location>
</feature>
<feature type="turn" evidence="23">
    <location>
        <begin position="79"/>
        <end position="81"/>
    </location>
</feature>
<feature type="helix" evidence="23">
    <location>
        <begin position="82"/>
        <end position="93"/>
    </location>
</feature>
<feature type="helix" evidence="23">
    <location>
        <begin position="101"/>
        <end position="106"/>
    </location>
</feature>
<feature type="helix" evidence="23">
    <location>
        <begin position="107"/>
        <end position="109"/>
    </location>
</feature>
<feature type="strand" evidence="23">
    <location>
        <begin position="113"/>
        <end position="117"/>
    </location>
</feature>
<feature type="strand" evidence="23">
    <location>
        <begin position="127"/>
        <end position="131"/>
    </location>
</feature>
<feature type="turn" evidence="23">
    <location>
        <begin position="133"/>
        <end position="136"/>
    </location>
</feature>
<feature type="strand" evidence="23">
    <location>
        <begin position="138"/>
        <end position="149"/>
    </location>
</feature>
<feature type="helix" evidence="23">
    <location>
        <begin position="158"/>
        <end position="167"/>
    </location>
</feature>
<feature type="helix" evidence="23">
    <location>
        <begin position="171"/>
        <end position="174"/>
    </location>
</feature>
<feature type="strand" evidence="23">
    <location>
        <begin position="175"/>
        <end position="185"/>
    </location>
</feature>
<feature type="turn" evidence="23">
    <location>
        <begin position="186"/>
        <end position="189"/>
    </location>
</feature>
<feature type="strand" evidence="23">
    <location>
        <begin position="190"/>
        <end position="194"/>
    </location>
</feature>
<feature type="helix" evidence="23">
    <location>
        <begin position="196"/>
        <end position="200"/>
    </location>
</feature>
<feature type="turn" evidence="23">
    <location>
        <begin position="204"/>
        <end position="206"/>
    </location>
</feature>
<feature type="helix" evidence="23">
    <location>
        <begin position="207"/>
        <end position="212"/>
    </location>
</feature>
<feature type="helix" evidence="23">
    <location>
        <begin position="213"/>
        <end position="215"/>
    </location>
</feature>
<feature type="strand" evidence="24">
    <location>
        <begin position="218"/>
        <end position="221"/>
    </location>
</feature>
<feature type="helix" evidence="23">
    <location>
        <begin position="223"/>
        <end position="241"/>
    </location>
</feature>
<feature type="strand" evidence="23">
    <location>
        <begin position="245"/>
        <end position="258"/>
    </location>
</feature>
<feature type="strand" evidence="23">
    <location>
        <begin position="379"/>
        <end position="384"/>
    </location>
</feature>
<feature type="strand" evidence="23">
    <location>
        <begin position="389"/>
        <end position="391"/>
    </location>
</feature>
<feature type="helix" evidence="23">
    <location>
        <begin position="397"/>
        <end position="413"/>
    </location>
</feature>
<name>IPMK_HUMAN</name>
<protein>
    <recommendedName>
        <fullName>Inositol polyphosphate multikinase</fullName>
        <ecNumber evidence="5">2.7.1.140</ecNumber>
        <ecNumber evidence="4 5 6 9">2.7.1.151</ecNumber>
        <ecNumber evidence="2">2.7.1.153</ecNumber>
    </recommendedName>
    <alternativeName>
        <fullName evidence="10">Inositol 1,3,4,6-tetrakisphosphate 5-kinase</fullName>
    </alternativeName>
</protein>